<comment type="function">
    <text evidence="1">Catalyzes the synthesis of the hydroxymethylpyrimidine phosphate (HMP-P) moiety of thiamine from aminoimidazole ribotide (AIR) in a radical S-adenosyl-L-methionine (SAM)-dependent reaction.</text>
</comment>
<comment type="catalytic activity">
    <reaction evidence="1">
        <text>5-amino-1-(5-phospho-beta-D-ribosyl)imidazole + S-adenosyl-L-methionine = 4-amino-2-methyl-5-(phosphooxymethyl)pyrimidine + CO + 5'-deoxyadenosine + formate + L-methionine + 3 H(+)</text>
        <dbReference type="Rhea" id="RHEA:24840"/>
        <dbReference type="ChEBI" id="CHEBI:15378"/>
        <dbReference type="ChEBI" id="CHEBI:15740"/>
        <dbReference type="ChEBI" id="CHEBI:17245"/>
        <dbReference type="ChEBI" id="CHEBI:17319"/>
        <dbReference type="ChEBI" id="CHEBI:57844"/>
        <dbReference type="ChEBI" id="CHEBI:58354"/>
        <dbReference type="ChEBI" id="CHEBI:59789"/>
        <dbReference type="ChEBI" id="CHEBI:137981"/>
        <dbReference type="EC" id="4.1.99.17"/>
    </reaction>
</comment>
<comment type="cofactor">
    <cofactor evidence="1">
        <name>[4Fe-4S] cluster</name>
        <dbReference type="ChEBI" id="CHEBI:49883"/>
    </cofactor>
    <text evidence="1">Binds 1 [4Fe-4S] cluster per subunit. The cluster is coordinated with 3 cysteines and an exchangeable S-adenosyl-L-methionine.</text>
</comment>
<comment type="pathway">
    <text evidence="1">Cofactor biosynthesis; thiamine diphosphate biosynthesis.</text>
</comment>
<comment type="similarity">
    <text evidence="1">Belongs to the ThiC family.</text>
</comment>
<name>THIC_THESQ</name>
<evidence type="ECO:0000255" key="1">
    <source>
        <dbReference type="HAMAP-Rule" id="MF_00089"/>
    </source>
</evidence>
<proteinExistence type="inferred from homology"/>
<organism>
    <name type="scientific">Thermotoga sp. (strain RQ2)</name>
    <dbReference type="NCBI Taxonomy" id="126740"/>
    <lineage>
        <taxon>Bacteria</taxon>
        <taxon>Thermotogati</taxon>
        <taxon>Thermotogota</taxon>
        <taxon>Thermotogae</taxon>
        <taxon>Thermotogales</taxon>
        <taxon>Thermotogaceae</taxon>
        <taxon>Thermotoga</taxon>
    </lineage>
</organism>
<keyword id="KW-0004">4Fe-4S</keyword>
<keyword id="KW-0408">Iron</keyword>
<keyword id="KW-0411">Iron-sulfur</keyword>
<keyword id="KW-0456">Lyase</keyword>
<keyword id="KW-0479">Metal-binding</keyword>
<keyword id="KW-0949">S-adenosyl-L-methionine</keyword>
<keyword id="KW-0784">Thiamine biosynthesis</keyword>
<keyword id="KW-0862">Zinc</keyword>
<accession>B1LCP2</accession>
<reference key="1">
    <citation type="journal article" date="2011" name="J. Bacteriol.">
        <title>Genome sequence of Thermotoga sp. strain RQ2, a hyperthermophilic bacterium isolated from a geothermally heated region of the seafloor near Ribeira Quente, the Azores.</title>
        <authorList>
            <person name="Swithers K.S."/>
            <person name="DiPippo J.L."/>
            <person name="Bruce D.C."/>
            <person name="Detter C."/>
            <person name="Tapia R."/>
            <person name="Han S."/>
            <person name="Saunders E."/>
            <person name="Goodwin L.A."/>
            <person name="Han J."/>
            <person name="Woyke T."/>
            <person name="Pitluck S."/>
            <person name="Pennacchio L."/>
            <person name="Nolan M."/>
            <person name="Mikhailova N."/>
            <person name="Lykidis A."/>
            <person name="Land M.L."/>
            <person name="Brettin T."/>
            <person name="Stetter K.O."/>
            <person name="Nelson K.E."/>
            <person name="Gogarten J.P."/>
            <person name="Noll K.M."/>
        </authorList>
    </citation>
    <scope>NUCLEOTIDE SEQUENCE [LARGE SCALE GENOMIC DNA]</scope>
    <source>
        <strain>RQ2</strain>
    </source>
</reference>
<sequence>MTQMEMARKGVVSDEMKKVAEYEGVDVEIVRQKLAEGRAVLPKNKLHRIERPMIVGEGFSVKVNANIGTSQGFSSLEEEKEKARVAIEYGADSLMVLSTWGDLREIRRAIVEMSPVPVGSVPIYDSAVRSYQMKKNVVDFSEKDFFDMVIAHAEDGIDFMTIHVGVTRRVLDRIKSSRRVLKIVSRGGAIIAGWMIKNNRENPFYEHFDELLDIAKDYDITLSLGDGMRPGAVVDASDAQQFEELFVMGELVEKAREKGVQVMLEGPGHVPLNEVEMNVRLMKKIGKGAPIFLLGPLPTDRAMGYDHIACAIGGALAGYYGADFLCYVTPSEHISLPDVEDVREGVIASKIAAIVADVARGNKKAWELEKKMALARKNFDWETMFSLSLGKDVAKKKYEERPYPDKGCSMCGPFCAIKIAEEFS</sequence>
<feature type="chain" id="PRO_1000093243" description="Phosphomethylpyrimidine synthase">
    <location>
        <begin position="1"/>
        <end position="424"/>
    </location>
</feature>
<feature type="binding site" evidence="1">
    <location>
        <position position="66"/>
    </location>
    <ligand>
        <name>substrate</name>
    </ligand>
</feature>
<feature type="binding site" evidence="1">
    <location>
        <position position="95"/>
    </location>
    <ligand>
        <name>substrate</name>
    </ligand>
</feature>
<feature type="binding site" evidence="1">
    <location>
        <position position="124"/>
    </location>
    <ligand>
        <name>substrate</name>
    </ligand>
</feature>
<feature type="binding site" evidence="1">
    <location>
        <position position="163"/>
    </location>
    <ligand>
        <name>substrate</name>
    </ligand>
</feature>
<feature type="binding site" evidence="1">
    <location>
        <begin position="185"/>
        <end position="187"/>
    </location>
    <ligand>
        <name>substrate</name>
    </ligand>
</feature>
<feature type="binding site" evidence="1">
    <location>
        <begin position="226"/>
        <end position="229"/>
    </location>
    <ligand>
        <name>substrate</name>
    </ligand>
</feature>
<feature type="binding site" evidence="1">
    <location>
        <position position="265"/>
    </location>
    <ligand>
        <name>substrate</name>
    </ligand>
</feature>
<feature type="binding site" evidence="1">
    <location>
        <position position="269"/>
    </location>
    <ligand>
        <name>Zn(2+)</name>
        <dbReference type="ChEBI" id="CHEBI:29105"/>
    </ligand>
</feature>
<feature type="binding site" evidence="1">
    <location>
        <position position="292"/>
    </location>
    <ligand>
        <name>substrate</name>
    </ligand>
</feature>
<feature type="binding site" evidence="1">
    <location>
        <position position="333"/>
    </location>
    <ligand>
        <name>Zn(2+)</name>
        <dbReference type="ChEBI" id="CHEBI:29105"/>
    </ligand>
</feature>
<feature type="binding site" evidence="1">
    <location>
        <position position="408"/>
    </location>
    <ligand>
        <name>[4Fe-4S] cluster</name>
        <dbReference type="ChEBI" id="CHEBI:49883"/>
        <note>4Fe-4S-S-AdoMet</note>
    </ligand>
</feature>
<feature type="binding site" evidence="1">
    <location>
        <position position="411"/>
    </location>
    <ligand>
        <name>[4Fe-4S] cluster</name>
        <dbReference type="ChEBI" id="CHEBI:49883"/>
        <note>4Fe-4S-S-AdoMet</note>
    </ligand>
</feature>
<feature type="binding site" evidence="1">
    <location>
        <position position="415"/>
    </location>
    <ligand>
        <name>[4Fe-4S] cluster</name>
        <dbReference type="ChEBI" id="CHEBI:49883"/>
        <note>4Fe-4S-S-AdoMet</note>
    </ligand>
</feature>
<gene>
    <name evidence="1" type="primary">thiC</name>
    <name type="ordered locus">TRQ2_0139</name>
</gene>
<dbReference type="EC" id="4.1.99.17" evidence="1"/>
<dbReference type="EMBL" id="CP000969">
    <property type="protein sequence ID" value="ACB08500.1"/>
    <property type="molecule type" value="Genomic_DNA"/>
</dbReference>
<dbReference type="RefSeq" id="WP_012310345.1">
    <property type="nucleotide sequence ID" value="NC_010483.1"/>
</dbReference>
<dbReference type="SMR" id="B1LCP2"/>
<dbReference type="KEGG" id="trq:TRQ2_0139"/>
<dbReference type="HOGENOM" id="CLU_013181_2_2_0"/>
<dbReference type="UniPathway" id="UPA00060"/>
<dbReference type="Proteomes" id="UP000001687">
    <property type="component" value="Chromosome"/>
</dbReference>
<dbReference type="GO" id="GO:0005829">
    <property type="term" value="C:cytosol"/>
    <property type="evidence" value="ECO:0007669"/>
    <property type="project" value="TreeGrafter"/>
</dbReference>
<dbReference type="GO" id="GO:0051539">
    <property type="term" value="F:4 iron, 4 sulfur cluster binding"/>
    <property type="evidence" value="ECO:0007669"/>
    <property type="project" value="UniProtKB-KW"/>
</dbReference>
<dbReference type="GO" id="GO:0016830">
    <property type="term" value="F:carbon-carbon lyase activity"/>
    <property type="evidence" value="ECO:0007669"/>
    <property type="project" value="InterPro"/>
</dbReference>
<dbReference type="GO" id="GO:0008270">
    <property type="term" value="F:zinc ion binding"/>
    <property type="evidence" value="ECO:0007669"/>
    <property type="project" value="UniProtKB-UniRule"/>
</dbReference>
<dbReference type="GO" id="GO:0009228">
    <property type="term" value="P:thiamine biosynthetic process"/>
    <property type="evidence" value="ECO:0007669"/>
    <property type="project" value="UniProtKB-KW"/>
</dbReference>
<dbReference type="GO" id="GO:0009229">
    <property type="term" value="P:thiamine diphosphate biosynthetic process"/>
    <property type="evidence" value="ECO:0007669"/>
    <property type="project" value="UniProtKB-UniRule"/>
</dbReference>
<dbReference type="FunFam" id="3.20.20.540:FF:000002">
    <property type="entry name" value="Phosphomethylpyrimidine synthase"/>
    <property type="match status" value="1"/>
</dbReference>
<dbReference type="Gene3D" id="3.20.20.540">
    <property type="entry name" value="Radical SAM ThiC family, central domain"/>
    <property type="match status" value="1"/>
</dbReference>
<dbReference type="HAMAP" id="MF_00089">
    <property type="entry name" value="ThiC"/>
    <property type="match status" value="1"/>
</dbReference>
<dbReference type="InterPro" id="IPR037509">
    <property type="entry name" value="ThiC"/>
</dbReference>
<dbReference type="InterPro" id="IPR038521">
    <property type="entry name" value="ThiC/Bza_core_dom"/>
</dbReference>
<dbReference type="InterPro" id="IPR002817">
    <property type="entry name" value="ThiC/BzaA/B"/>
</dbReference>
<dbReference type="NCBIfam" id="NF009895">
    <property type="entry name" value="PRK13352.1"/>
    <property type="match status" value="1"/>
</dbReference>
<dbReference type="NCBIfam" id="TIGR00190">
    <property type="entry name" value="thiC"/>
    <property type="match status" value="1"/>
</dbReference>
<dbReference type="PANTHER" id="PTHR30557:SF1">
    <property type="entry name" value="PHOSPHOMETHYLPYRIMIDINE SYNTHASE, CHLOROPLASTIC"/>
    <property type="match status" value="1"/>
</dbReference>
<dbReference type="PANTHER" id="PTHR30557">
    <property type="entry name" value="THIAMINE BIOSYNTHESIS PROTEIN THIC"/>
    <property type="match status" value="1"/>
</dbReference>
<dbReference type="Pfam" id="PF01964">
    <property type="entry name" value="ThiC_Rad_SAM"/>
    <property type="match status" value="1"/>
</dbReference>
<dbReference type="SFLD" id="SFLDF00407">
    <property type="entry name" value="phosphomethylpyrimidine_syntha"/>
    <property type="match status" value="1"/>
</dbReference>
<dbReference type="SFLD" id="SFLDG01114">
    <property type="entry name" value="phosphomethylpyrimidine_syntha"/>
    <property type="match status" value="1"/>
</dbReference>
<dbReference type="SFLD" id="SFLDS00113">
    <property type="entry name" value="Radical_SAM_Phosphomethylpyrim"/>
    <property type="match status" value="1"/>
</dbReference>
<protein>
    <recommendedName>
        <fullName evidence="1">Phosphomethylpyrimidine synthase</fullName>
        <ecNumber evidence="1">4.1.99.17</ecNumber>
    </recommendedName>
    <alternativeName>
        <fullName evidence="1">Hydroxymethylpyrimidine phosphate synthase</fullName>
        <shortName evidence="1">HMP-P synthase</shortName>
        <shortName evidence="1">HMP-phosphate synthase</shortName>
        <shortName evidence="1">HMPP synthase</shortName>
    </alternativeName>
    <alternativeName>
        <fullName evidence="1">Thiamine biosynthesis protein ThiC</fullName>
    </alternativeName>
</protein>